<organism>
    <name type="scientific">Staphylococcus aureus (strain Mu3 / ATCC 700698)</name>
    <dbReference type="NCBI Taxonomy" id="418127"/>
    <lineage>
        <taxon>Bacteria</taxon>
        <taxon>Bacillati</taxon>
        <taxon>Bacillota</taxon>
        <taxon>Bacilli</taxon>
        <taxon>Bacillales</taxon>
        <taxon>Staphylococcaceae</taxon>
        <taxon>Staphylococcus</taxon>
    </lineage>
</organism>
<gene>
    <name evidence="1" type="primary">grpE</name>
    <name type="ordered locus">SAHV_1568</name>
</gene>
<keyword id="KW-0143">Chaperone</keyword>
<keyword id="KW-0963">Cytoplasm</keyword>
<keyword id="KW-0346">Stress response</keyword>
<feature type="chain" id="PRO_1000053645" description="Protein GrpE">
    <location>
        <begin position="1"/>
        <end position="208"/>
    </location>
</feature>
<feature type="region of interest" description="Disordered" evidence="2">
    <location>
        <begin position="1"/>
        <end position="59"/>
    </location>
</feature>
<feature type="compositionally biased region" description="Basic and acidic residues" evidence="2">
    <location>
        <begin position="1"/>
        <end position="12"/>
    </location>
</feature>
<feature type="compositionally biased region" description="Polar residues" evidence="2">
    <location>
        <begin position="13"/>
        <end position="23"/>
    </location>
</feature>
<feature type="compositionally biased region" description="Acidic residues" evidence="2">
    <location>
        <begin position="42"/>
        <end position="55"/>
    </location>
</feature>
<proteinExistence type="inferred from homology"/>
<protein>
    <recommendedName>
        <fullName evidence="1">Protein GrpE</fullName>
    </recommendedName>
    <alternativeName>
        <fullName evidence="1">HSP-70 cofactor</fullName>
    </alternativeName>
</protein>
<accession>A7X2Y2</accession>
<dbReference type="EMBL" id="AP009324">
    <property type="protein sequence ID" value="BAF78451.1"/>
    <property type="molecule type" value="Genomic_DNA"/>
</dbReference>
<dbReference type="RefSeq" id="WP_000182211.1">
    <property type="nucleotide sequence ID" value="NC_009782.1"/>
</dbReference>
<dbReference type="SMR" id="A7X2Y2"/>
<dbReference type="KEGG" id="saw:SAHV_1568"/>
<dbReference type="HOGENOM" id="CLU_057217_6_3_9"/>
<dbReference type="GO" id="GO:0005737">
    <property type="term" value="C:cytoplasm"/>
    <property type="evidence" value="ECO:0007669"/>
    <property type="project" value="UniProtKB-SubCell"/>
</dbReference>
<dbReference type="GO" id="GO:0000774">
    <property type="term" value="F:adenyl-nucleotide exchange factor activity"/>
    <property type="evidence" value="ECO:0007669"/>
    <property type="project" value="InterPro"/>
</dbReference>
<dbReference type="GO" id="GO:0042803">
    <property type="term" value="F:protein homodimerization activity"/>
    <property type="evidence" value="ECO:0007669"/>
    <property type="project" value="InterPro"/>
</dbReference>
<dbReference type="GO" id="GO:0051087">
    <property type="term" value="F:protein-folding chaperone binding"/>
    <property type="evidence" value="ECO:0007669"/>
    <property type="project" value="InterPro"/>
</dbReference>
<dbReference type="GO" id="GO:0051082">
    <property type="term" value="F:unfolded protein binding"/>
    <property type="evidence" value="ECO:0007669"/>
    <property type="project" value="TreeGrafter"/>
</dbReference>
<dbReference type="GO" id="GO:0006457">
    <property type="term" value="P:protein folding"/>
    <property type="evidence" value="ECO:0007669"/>
    <property type="project" value="InterPro"/>
</dbReference>
<dbReference type="CDD" id="cd00446">
    <property type="entry name" value="GrpE"/>
    <property type="match status" value="1"/>
</dbReference>
<dbReference type="FunFam" id="2.30.22.10:FF:000001">
    <property type="entry name" value="Protein GrpE"/>
    <property type="match status" value="1"/>
</dbReference>
<dbReference type="FunFam" id="3.90.20.20:FF:000002">
    <property type="entry name" value="Protein GrpE"/>
    <property type="match status" value="1"/>
</dbReference>
<dbReference type="Gene3D" id="3.90.20.20">
    <property type="match status" value="1"/>
</dbReference>
<dbReference type="Gene3D" id="2.30.22.10">
    <property type="entry name" value="Head domain of nucleotide exchange factor GrpE"/>
    <property type="match status" value="1"/>
</dbReference>
<dbReference type="HAMAP" id="MF_01151">
    <property type="entry name" value="GrpE"/>
    <property type="match status" value="1"/>
</dbReference>
<dbReference type="InterPro" id="IPR000740">
    <property type="entry name" value="GrpE"/>
</dbReference>
<dbReference type="InterPro" id="IPR013805">
    <property type="entry name" value="GrpE_coiled_coil"/>
</dbReference>
<dbReference type="InterPro" id="IPR009012">
    <property type="entry name" value="GrpE_head"/>
</dbReference>
<dbReference type="NCBIfam" id="NF010738">
    <property type="entry name" value="PRK14140.1"/>
    <property type="match status" value="1"/>
</dbReference>
<dbReference type="PANTHER" id="PTHR21237">
    <property type="entry name" value="GRPE PROTEIN"/>
    <property type="match status" value="1"/>
</dbReference>
<dbReference type="PANTHER" id="PTHR21237:SF23">
    <property type="entry name" value="GRPE PROTEIN HOMOLOG, MITOCHONDRIAL"/>
    <property type="match status" value="1"/>
</dbReference>
<dbReference type="Pfam" id="PF01025">
    <property type="entry name" value="GrpE"/>
    <property type="match status" value="1"/>
</dbReference>
<dbReference type="PRINTS" id="PR00773">
    <property type="entry name" value="GRPEPROTEIN"/>
</dbReference>
<dbReference type="SUPFAM" id="SSF58014">
    <property type="entry name" value="Coiled-coil domain of nucleotide exchange factor GrpE"/>
    <property type="match status" value="1"/>
</dbReference>
<dbReference type="SUPFAM" id="SSF51064">
    <property type="entry name" value="Head domain of nucleotide exchange factor GrpE"/>
    <property type="match status" value="1"/>
</dbReference>
<dbReference type="PROSITE" id="PS01071">
    <property type="entry name" value="GRPE"/>
    <property type="match status" value="1"/>
</dbReference>
<comment type="function">
    <text evidence="1">Participates actively in the response to hyperosmotic and heat shock by preventing the aggregation of stress-denatured proteins, in association with DnaK and GrpE. It is the nucleotide exchange factor for DnaK and may function as a thermosensor. Unfolded proteins bind initially to DnaJ; upon interaction with the DnaJ-bound protein, DnaK hydrolyzes its bound ATP, resulting in the formation of a stable complex. GrpE releases ADP from DnaK; ATP binding to DnaK triggers the release of the substrate protein, thus completing the reaction cycle. Several rounds of ATP-dependent interactions between DnaJ, DnaK and GrpE are required for fully efficient folding.</text>
</comment>
<comment type="subunit">
    <text evidence="1">Homodimer.</text>
</comment>
<comment type="subcellular location">
    <subcellularLocation>
        <location evidence="1">Cytoplasm</location>
    </subcellularLocation>
</comment>
<comment type="similarity">
    <text evidence="1">Belongs to the GrpE family.</text>
</comment>
<evidence type="ECO:0000255" key="1">
    <source>
        <dbReference type="HAMAP-Rule" id="MF_01151"/>
    </source>
</evidence>
<evidence type="ECO:0000256" key="2">
    <source>
        <dbReference type="SAM" id="MobiDB-lite"/>
    </source>
</evidence>
<reference key="1">
    <citation type="journal article" date="2008" name="Antimicrob. Agents Chemother.">
        <title>Mutated response regulator graR is responsible for phenotypic conversion of Staphylococcus aureus from heterogeneous vancomycin-intermediate resistance to vancomycin-intermediate resistance.</title>
        <authorList>
            <person name="Neoh H.-M."/>
            <person name="Cui L."/>
            <person name="Yuzawa H."/>
            <person name="Takeuchi F."/>
            <person name="Matsuo M."/>
            <person name="Hiramatsu K."/>
        </authorList>
    </citation>
    <scope>NUCLEOTIDE SEQUENCE [LARGE SCALE GENOMIC DNA]</scope>
    <source>
        <strain>Mu3 / ATCC 700698</strain>
    </source>
</reference>
<sequence>MTNKDESVEKNTESTVEETNIKQNIDDSVEQAEESKGHLQDEAIEETSDENVIEEIDPKDQKINELQQLADENEEKYLRLYAEFENYKRRIQKENEINKTYQAQRVLTDILPAIDNIERALQIEGDDETFKSLQKGVQMVHESLINALKDNGLEVIKTEGEAFDPNIHQAVVQDDNPDFESGEITQELQKGYKLKDRVLRPSMVKVNQ</sequence>
<name>GRPE_STAA1</name>